<protein>
    <recommendedName>
        <fullName evidence="1">Photosystem II CP47 reaction center protein</fullName>
    </recommendedName>
    <alternativeName>
        <fullName evidence="1">PSII 47 kDa protein</fullName>
    </alternativeName>
    <alternativeName>
        <fullName evidence="1">Protein CP-47</fullName>
    </alternativeName>
</protein>
<reference key="1">
    <citation type="journal article" date="2004" name="Gene">
        <title>The complete nucleotide sequence of wild rice (Oryza nivara) chloroplast genome: first genome wide comparative sequence analysis of wild and cultivated rice.</title>
        <authorList>
            <person name="Masood M.S."/>
            <person name="Nishikawa T."/>
            <person name="Fukuoka S."/>
            <person name="Njenga P.K."/>
            <person name="Tsudzuki T."/>
            <person name="Kadowaki K."/>
        </authorList>
    </citation>
    <scope>NUCLEOTIDE SEQUENCE [LARGE SCALE GENOMIC DNA]</scope>
    <source>
        <strain evidence="2">cv. SL10</strain>
    </source>
</reference>
<evidence type="ECO:0000255" key="1">
    <source>
        <dbReference type="HAMAP-Rule" id="MF_01495"/>
    </source>
</evidence>
<evidence type="ECO:0000312" key="2">
    <source>
        <dbReference type="Proteomes" id="UP000006591"/>
    </source>
</evidence>
<dbReference type="EMBL" id="AP006728">
    <property type="protein sequence ID" value="BAD26804.1"/>
    <property type="molecule type" value="Genomic_DNA"/>
</dbReference>
<dbReference type="RefSeq" id="YP_052775.1">
    <property type="nucleotide sequence ID" value="NC_005973.1"/>
</dbReference>
<dbReference type="SMR" id="Q6ENE8"/>
<dbReference type="STRING" id="4536.Q6ENE8"/>
<dbReference type="GeneID" id="2885951"/>
<dbReference type="Proteomes" id="UP000006591">
    <property type="component" value="Chloroplast"/>
</dbReference>
<dbReference type="GO" id="GO:0009535">
    <property type="term" value="C:chloroplast thylakoid membrane"/>
    <property type="evidence" value="ECO:0007669"/>
    <property type="project" value="UniProtKB-SubCell"/>
</dbReference>
<dbReference type="GO" id="GO:0009523">
    <property type="term" value="C:photosystem II"/>
    <property type="evidence" value="ECO:0007669"/>
    <property type="project" value="UniProtKB-KW"/>
</dbReference>
<dbReference type="GO" id="GO:0009536">
    <property type="term" value="C:plastid"/>
    <property type="evidence" value="ECO:0000305"/>
    <property type="project" value="Gramene"/>
</dbReference>
<dbReference type="GO" id="GO:0016168">
    <property type="term" value="F:chlorophyll binding"/>
    <property type="evidence" value="ECO:0007669"/>
    <property type="project" value="UniProtKB-UniRule"/>
</dbReference>
<dbReference type="GO" id="GO:0045156">
    <property type="term" value="F:electron transporter, transferring electrons within the cyclic electron transport pathway of photosynthesis activity"/>
    <property type="evidence" value="ECO:0007669"/>
    <property type="project" value="InterPro"/>
</dbReference>
<dbReference type="GO" id="GO:0009772">
    <property type="term" value="P:photosynthetic electron transport in photosystem II"/>
    <property type="evidence" value="ECO:0007669"/>
    <property type="project" value="InterPro"/>
</dbReference>
<dbReference type="FunFam" id="3.10.680.10:FF:000001">
    <property type="entry name" value="Photosystem II CP47 reaction center protein"/>
    <property type="match status" value="1"/>
</dbReference>
<dbReference type="Gene3D" id="3.10.680.10">
    <property type="entry name" value="Photosystem II CP47 reaction center protein"/>
    <property type="match status" value="1"/>
</dbReference>
<dbReference type="HAMAP" id="MF_01495">
    <property type="entry name" value="PSII_PsbB_CP47"/>
    <property type="match status" value="1"/>
</dbReference>
<dbReference type="InterPro" id="IPR000932">
    <property type="entry name" value="PS_antenna-like"/>
</dbReference>
<dbReference type="InterPro" id="IPR036001">
    <property type="entry name" value="PS_II_antenna-like_sf"/>
</dbReference>
<dbReference type="InterPro" id="IPR017486">
    <property type="entry name" value="PSII_PsbB"/>
</dbReference>
<dbReference type="NCBIfam" id="TIGR03039">
    <property type="entry name" value="PS_II_CP47"/>
    <property type="match status" value="1"/>
</dbReference>
<dbReference type="PANTHER" id="PTHR33180">
    <property type="entry name" value="PHOTOSYSTEM II CP43 REACTION CENTER PROTEIN"/>
    <property type="match status" value="1"/>
</dbReference>
<dbReference type="PANTHER" id="PTHR33180:SF37">
    <property type="entry name" value="PHOTOSYSTEM II CP43 REACTION CENTER PROTEIN"/>
    <property type="match status" value="1"/>
</dbReference>
<dbReference type="Pfam" id="PF00421">
    <property type="entry name" value="PSII"/>
    <property type="match status" value="1"/>
</dbReference>
<dbReference type="SUPFAM" id="SSF161077">
    <property type="entry name" value="Photosystem II antenna protein-like"/>
    <property type="match status" value="1"/>
</dbReference>
<accession>Q6ENE8</accession>
<proteinExistence type="inferred from homology"/>
<gene>
    <name evidence="1" type="primary">psbB</name>
</gene>
<geneLocation type="chloroplast"/>
<keyword id="KW-0148">Chlorophyll</keyword>
<keyword id="KW-0150">Chloroplast</keyword>
<keyword id="KW-0157">Chromophore</keyword>
<keyword id="KW-0472">Membrane</keyword>
<keyword id="KW-0602">Photosynthesis</keyword>
<keyword id="KW-0604">Photosystem II</keyword>
<keyword id="KW-0934">Plastid</keyword>
<keyword id="KW-1185">Reference proteome</keyword>
<keyword id="KW-0793">Thylakoid</keyword>
<keyword id="KW-0812">Transmembrane</keyword>
<keyword id="KW-1133">Transmembrane helix</keyword>
<organism>
    <name type="scientific">Oryza nivara</name>
    <name type="common">Indian wild rice</name>
    <name type="synonym">Oryza sativa f. spontanea</name>
    <dbReference type="NCBI Taxonomy" id="4536"/>
    <lineage>
        <taxon>Eukaryota</taxon>
        <taxon>Viridiplantae</taxon>
        <taxon>Streptophyta</taxon>
        <taxon>Embryophyta</taxon>
        <taxon>Tracheophyta</taxon>
        <taxon>Spermatophyta</taxon>
        <taxon>Magnoliopsida</taxon>
        <taxon>Liliopsida</taxon>
        <taxon>Poales</taxon>
        <taxon>Poaceae</taxon>
        <taxon>BOP clade</taxon>
        <taxon>Oryzoideae</taxon>
        <taxon>Oryzeae</taxon>
        <taxon>Oryzinae</taxon>
        <taxon>Oryza</taxon>
    </lineage>
</organism>
<sequence>MGLPWYRVHTVVLNDPGRLLSVHIMHTALVSGWAGSMALYELAVFDPSDPVLDPMWRQGMFVIPFMTRLGITNSWGGWSISGGTVTNPGIWSYEGVAGAHIVFSGLCFLAAIWHWVYWDLEIFCDERTGKPSLDLPKIFGIHLFLAGVACFGFGAFHVTGLYGPGIWVSDPYGLTGKVQAVNPAWGAEGFDPFVPGGIASHHIAAGTLGILAGLFHLSVRPPQRLYKGLRMGNIETVLSSSIAAVFFAAFVVAGTMWYGSATTPIELFGPTRYQWDQGYFQQEIYRRVSDGLAENLSLSEAWSKIPEKLAFYDYIGNNPAKGGLFRAGSMDNGDGIAVGWLGHPIFRDKEGRELFVRRMPTFFETFPVVLVDEEGIVRADVPFRRAESKYSVEQVGVTVEFYGGELNGVSYSDPATVKKYARRSQLGEIFELDRATLKSDGVFRSSPRGWFTFGHATFALLFFFGHIWHGARTLFRDVFAGIDPDLDAQVEFGTFQKVGDPTTRRQPV</sequence>
<comment type="function">
    <text evidence="1">One of the components of the core complex of photosystem II (PSII). It binds chlorophyll and helps catalyze the primary light-induced photochemical processes of PSII. PSII is a light-driven water:plastoquinone oxidoreductase, using light energy to abstract electrons from H(2)O, generating O(2) and a proton gradient subsequently used for ATP formation.</text>
</comment>
<comment type="cofactor">
    <text evidence="1">Binds multiple chlorophylls. PSII binds additional chlorophylls, carotenoids and specific lipids.</text>
</comment>
<comment type="subunit">
    <text evidence="1">PSII is composed of 1 copy each of membrane proteins PsbA, PsbB, PsbC, PsbD, PsbE, PsbF, PsbH, PsbI, PsbJ, PsbK, PsbL, PsbM, PsbT, PsbX, PsbY, PsbZ, Psb30/Ycf12, at least 3 peripheral proteins of the oxygen-evolving complex and a large number of cofactors. It forms dimeric complexes.</text>
</comment>
<comment type="subcellular location">
    <subcellularLocation>
        <location evidence="1">Plastid</location>
        <location evidence="1">Chloroplast thylakoid membrane</location>
        <topology evidence="1">Multi-pass membrane protein</topology>
    </subcellularLocation>
</comment>
<comment type="similarity">
    <text evidence="1">Belongs to the PsbB/PsbC family. PsbB subfamily.</text>
</comment>
<name>PSBB_ORYNI</name>
<feature type="chain" id="PRO_0000077492" description="Photosystem II CP47 reaction center protein">
    <location>
        <begin position="1"/>
        <end position="508"/>
    </location>
</feature>
<feature type="transmembrane region" description="Helical" evidence="1">
    <location>
        <begin position="21"/>
        <end position="36"/>
    </location>
</feature>
<feature type="transmembrane region" description="Helical" evidence="1">
    <location>
        <begin position="101"/>
        <end position="115"/>
    </location>
</feature>
<feature type="transmembrane region" description="Helical" evidence="1">
    <location>
        <begin position="140"/>
        <end position="156"/>
    </location>
</feature>
<feature type="transmembrane region" description="Helical" evidence="1">
    <location>
        <begin position="203"/>
        <end position="218"/>
    </location>
</feature>
<feature type="transmembrane region" description="Helical" evidence="1">
    <location>
        <begin position="237"/>
        <end position="252"/>
    </location>
</feature>
<feature type="transmembrane region" description="Helical" evidence="1">
    <location>
        <begin position="457"/>
        <end position="472"/>
    </location>
</feature>